<proteinExistence type="inferred from homology"/>
<gene>
    <name evidence="1" type="primary">mnmA</name>
    <name type="synonym">trmU</name>
    <name type="ordered locus">LMOf2365_1531</name>
</gene>
<protein>
    <recommendedName>
        <fullName evidence="1">tRNA-specific 2-thiouridylase MnmA</fullName>
        <ecNumber evidence="1">2.8.1.13</ecNumber>
    </recommendedName>
</protein>
<feature type="chain" id="PRO_0000121648" description="tRNA-specific 2-thiouridylase MnmA">
    <location>
        <begin position="1"/>
        <end position="371"/>
    </location>
</feature>
<feature type="region of interest" description="Interaction with target base in tRNA" evidence="1">
    <location>
        <begin position="99"/>
        <end position="101"/>
    </location>
</feature>
<feature type="region of interest" description="Interaction with tRNA" evidence="1">
    <location>
        <begin position="150"/>
        <end position="152"/>
    </location>
</feature>
<feature type="region of interest" description="Interaction with tRNA" evidence="1">
    <location>
        <begin position="308"/>
        <end position="309"/>
    </location>
</feature>
<feature type="active site" description="Nucleophile" evidence="1">
    <location>
        <position position="104"/>
    </location>
</feature>
<feature type="active site" description="Cysteine persulfide intermediate" evidence="1">
    <location>
        <position position="200"/>
    </location>
</feature>
<feature type="binding site" evidence="1">
    <location>
        <begin position="13"/>
        <end position="20"/>
    </location>
    <ligand>
        <name>ATP</name>
        <dbReference type="ChEBI" id="CHEBI:30616"/>
    </ligand>
</feature>
<feature type="binding site" evidence="1">
    <location>
        <position position="39"/>
    </location>
    <ligand>
        <name>ATP</name>
        <dbReference type="ChEBI" id="CHEBI:30616"/>
    </ligand>
</feature>
<feature type="binding site" evidence="1">
    <location>
        <position position="128"/>
    </location>
    <ligand>
        <name>ATP</name>
        <dbReference type="ChEBI" id="CHEBI:30616"/>
    </ligand>
</feature>
<feature type="site" description="Interaction with tRNA" evidence="1">
    <location>
        <position position="129"/>
    </location>
</feature>
<feature type="site" description="Interaction with tRNA" evidence="1">
    <location>
        <position position="341"/>
    </location>
</feature>
<feature type="disulfide bond" description="Alternate" evidence="1">
    <location>
        <begin position="104"/>
        <end position="200"/>
    </location>
</feature>
<comment type="function">
    <text evidence="1">Catalyzes the 2-thiolation of uridine at the wobble position (U34) of tRNA, leading to the formation of s(2)U34.</text>
</comment>
<comment type="catalytic activity">
    <reaction evidence="1">
        <text>S-sulfanyl-L-cysteinyl-[protein] + uridine(34) in tRNA + AH2 + ATP = 2-thiouridine(34) in tRNA + L-cysteinyl-[protein] + A + AMP + diphosphate + H(+)</text>
        <dbReference type="Rhea" id="RHEA:47032"/>
        <dbReference type="Rhea" id="RHEA-COMP:10131"/>
        <dbReference type="Rhea" id="RHEA-COMP:11726"/>
        <dbReference type="Rhea" id="RHEA-COMP:11727"/>
        <dbReference type="Rhea" id="RHEA-COMP:11728"/>
        <dbReference type="ChEBI" id="CHEBI:13193"/>
        <dbReference type="ChEBI" id="CHEBI:15378"/>
        <dbReference type="ChEBI" id="CHEBI:17499"/>
        <dbReference type="ChEBI" id="CHEBI:29950"/>
        <dbReference type="ChEBI" id="CHEBI:30616"/>
        <dbReference type="ChEBI" id="CHEBI:33019"/>
        <dbReference type="ChEBI" id="CHEBI:61963"/>
        <dbReference type="ChEBI" id="CHEBI:65315"/>
        <dbReference type="ChEBI" id="CHEBI:87170"/>
        <dbReference type="ChEBI" id="CHEBI:456215"/>
        <dbReference type="EC" id="2.8.1.13"/>
    </reaction>
</comment>
<comment type="subcellular location">
    <subcellularLocation>
        <location evidence="1">Cytoplasm</location>
    </subcellularLocation>
</comment>
<comment type="similarity">
    <text evidence="1">Belongs to the MnmA/TRMU family.</text>
</comment>
<organism>
    <name type="scientific">Listeria monocytogenes serotype 4b (strain F2365)</name>
    <dbReference type="NCBI Taxonomy" id="265669"/>
    <lineage>
        <taxon>Bacteria</taxon>
        <taxon>Bacillati</taxon>
        <taxon>Bacillota</taxon>
        <taxon>Bacilli</taxon>
        <taxon>Bacillales</taxon>
        <taxon>Listeriaceae</taxon>
        <taxon>Listeria</taxon>
    </lineage>
</organism>
<name>MNMA_LISMF</name>
<dbReference type="EC" id="2.8.1.13" evidence="1"/>
<dbReference type="EMBL" id="AE017262">
    <property type="protein sequence ID" value="AAT04306.1"/>
    <property type="molecule type" value="Genomic_DNA"/>
</dbReference>
<dbReference type="RefSeq" id="WP_003727410.1">
    <property type="nucleotide sequence ID" value="NC_002973.6"/>
</dbReference>
<dbReference type="SMR" id="Q71ZF8"/>
<dbReference type="KEGG" id="lmf:LMOf2365_1531"/>
<dbReference type="HOGENOM" id="CLU_035188_1_0_9"/>
<dbReference type="GO" id="GO:0005737">
    <property type="term" value="C:cytoplasm"/>
    <property type="evidence" value="ECO:0007669"/>
    <property type="project" value="UniProtKB-SubCell"/>
</dbReference>
<dbReference type="GO" id="GO:0005524">
    <property type="term" value="F:ATP binding"/>
    <property type="evidence" value="ECO:0007669"/>
    <property type="project" value="UniProtKB-KW"/>
</dbReference>
<dbReference type="GO" id="GO:0000049">
    <property type="term" value="F:tRNA binding"/>
    <property type="evidence" value="ECO:0007669"/>
    <property type="project" value="UniProtKB-KW"/>
</dbReference>
<dbReference type="GO" id="GO:0103016">
    <property type="term" value="F:tRNA-uridine 2-sulfurtransferase activity"/>
    <property type="evidence" value="ECO:0007669"/>
    <property type="project" value="UniProtKB-EC"/>
</dbReference>
<dbReference type="GO" id="GO:0002143">
    <property type="term" value="P:tRNA wobble position uridine thiolation"/>
    <property type="evidence" value="ECO:0007669"/>
    <property type="project" value="TreeGrafter"/>
</dbReference>
<dbReference type="CDD" id="cd01998">
    <property type="entry name" value="MnmA_TRMU-like"/>
    <property type="match status" value="1"/>
</dbReference>
<dbReference type="FunFam" id="2.30.30.280:FF:000001">
    <property type="entry name" value="tRNA-specific 2-thiouridylase MnmA"/>
    <property type="match status" value="1"/>
</dbReference>
<dbReference type="FunFam" id="2.40.30.10:FF:000023">
    <property type="entry name" value="tRNA-specific 2-thiouridylase MnmA"/>
    <property type="match status" value="1"/>
</dbReference>
<dbReference type="FunFam" id="3.40.50.620:FF:000004">
    <property type="entry name" value="tRNA-specific 2-thiouridylase MnmA"/>
    <property type="match status" value="1"/>
</dbReference>
<dbReference type="Gene3D" id="2.30.30.280">
    <property type="entry name" value="Adenine nucleotide alpha hydrolases-like domains"/>
    <property type="match status" value="1"/>
</dbReference>
<dbReference type="Gene3D" id="3.40.50.620">
    <property type="entry name" value="HUPs"/>
    <property type="match status" value="1"/>
</dbReference>
<dbReference type="Gene3D" id="2.40.30.10">
    <property type="entry name" value="Translation factors"/>
    <property type="match status" value="1"/>
</dbReference>
<dbReference type="HAMAP" id="MF_00144">
    <property type="entry name" value="tRNA_thiouridyl_MnmA"/>
    <property type="match status" value="1"/>
</dbReference>
<dbReference type="InterPro" id="IPR004506">
    <property type="entry name" value="MnmA-like"/>
</dbReference>
<dbReference type="InterPro" id="IPR046885">
    <property type="entry name" value="MnmA-like_C"/>
</dbReference>
<dbReference type="InterPro" id="IPR046884">
    <property type="entry name" value="MnmA-like_central"/>
</dbReference>
<dbReference type="InterPro" id="IPR023382">
    <property type="entry name" value="MnmA-like_central_sf"/>
</dbReference>
<dbReference type="InterPro" id="IPR014729">
    <property type="entry name" value="Rossmann-like_a/b/a_fold"/>
</dbReference>
<dbReference type="NCBIfam" id="NF001138">
    <property type="entry name" value="PRK00143.1"/>
    <property type="match status" value="1"/>
</dbReference>
<dbReference type="NCBIfam" id="TIGR00420">
    <property type="entry name" value="trmU"/>
    <property type="match status" value="1"/>
</dbReference>
<dbReference type="PANTHER" id="PTHR11933:SF5">
    <property type="entry name" value="MITOCHONDRIAL TRNA-SPECIFIC 2-THIOURIDYLASE 1"/>
    <property type="match status" value="1"/>
</dbReference>
<dbReference type="PANTHER" id="PTHR11933">
    <property type="entry name" value="TRNA 5-METHYLAMINOMETHYL-2-THIOURIDYLATE -METHYLTRANSFERASE"/>
    <property type="match status" value="1"/>
</dbReference>
<dbReference type="Pfam" id="PF03054">
    <property type="entry name" value="tRNA_Me_trans"/>
    <property type="match status" value="1"/>
</dbReference>
<dbReference type="Pfam" id="PF20258">
    <property type="entry name" value="tRNA_Me_trans_C"/>
    <property type="match status" value="1"/>
</dbReference>
<dbReference type="Pfam" id="PF20259">
    <property type="entry name" value="tRNA_Me_trans_M"/>
    <property type="match status" value="1"/>
</dbReference>
<dbReference type="SUPFAM" id="SSF52402">
    <property type="entry name" value="Adenine nucleotide alpha hydrolases-like"/>
    <property type="match status" value="1"/>
</dbReference>
<reference key="1">
    <citation type="journal article" date="2004" name="Nucleic Acids Res.">
        <title>Whole genome comparisons of serotype 4b and 1/2a strains of the food-borne pathogen Listeria monocytogenes reveal new insights into the core genome components of this species.</title>
        <authorList>
            <person name="Nelson K.E."/>
            <person name="Fouts D.E."/>
            <person name="Mongodin E.F."/>
            <person name="Ravel J."/>
            <person name="DeBoy R.T."/>
            <person name="Kolonay J.F."/>
            <person name="Rasko D.A."/>
            <person name="Angiuoli S.V."/>
            <person name="Gill S.R."/>
            <person name="Paulsen I.T."/>
            <person name="Peterson J.D."/>
            <person name="White O."/>
            <person name="Nelson W.C."/>
            <person name="Nierman W.C."/>
            <person name="Beanan M.J."/>
            <person name="Brinkac L.M."/>
            <person name="Daugherty S.C."/>
            <person name="Dodson R.J."/>
            <person name="Durkin A.S."/>
            <person name="Madupu R."/>
            <person name="Haft D.H."/>
            <person name="Selengut J."/>
            <person name="Van Aken S.E."/>
            <person name="Khouri H.M."/>
            <person name="Fedorova N."/>
            <person name="Forberger H.A."/>
            <person name="Tran B."/>
            <person name="Kathariou S."/>
            <person name="Wonderling L.D."/>
            <person name="Uhlich G.A."/>
            <person name="Bayles D.O."/>
            <person name="Luchansky J.B."/>
            <person name="Fraser C.M."/>
        </authorList>
    </citation>
    <scope>NUCLEOTIDE SEQUENCE [LARGE SCALE GENOMIC DNA]</scope>
    <source>
        <strain>F2365</strain>
    </source>
</reference>
<accession>Q71ZF8</accession>
<evidence type="ECO:0000255" key="1">
    <source>
        <dbReference type="HAMAP-Rule" id="MF_00144"/>
    </source>
</evidence>
<keyword id="KW-0067">ATP-binding</keyword>
<keyword id="KW-0963">Cytoplasm</keyword>
<keyword id="KW-1015">Disulfide bond</keyword>
<keyword id="KW-0547">Nucleotide-binding</keyword>
<keyword id="KW-0694">RNA-binding</keyword>
<keyword id="KW-0808">Transferase</keyword>
<keyword id="KW-0819">tRNA processing</keyword>
<keyword id="KW-0820">tRNA-binding</keyword>
<sequence>MSTNNSDIRVVVGMSGGVDSSVTAHILKEQGYDVIGIFMKNWDDTDEFGVCTATEDYDDVIRVANQIGIPYYAVNFEKEYWDKVFTYFLDEYKLGRTPNPDVMCNKEIKFKAFLEHAESLGADYVATGHYAQVKKVGDEIELLRGVDNNKDQTYFLNQLSQDQLKKVMFPLGGMEKTEVREIAKKAGLATANKKDSTGICFIGERNFKQFLSEYLPAQPGEMRTLNGEVLGKHDGLMYYTIGQRHGLGIGGDGEPWFVVGKDLKENVLFVEQGFHHETLYSDSLIATDISFTTNAEKPKTIECTAKFRYRQTDTKVTVHLREDGTAEVVFADPVRAITPGQAVVFYDGDICLGGGTIDTVWKNGAKLDYVG</sequence>